<organism>
    <name type="scientific">Aspergillus terreus (strain NIH 2624 / FGSC A1156)</name>
    <dbReference type="NCBI Taxonomy" id="341663"/>
    <lineage>
        <taxon>Eukaryota</taxon>
        <taxon>Fungi</taxon>
        <taxon>Dikarya</taxon>
        <taxon>Ascomycota</taxon>
        <taxon>Pezizomycotina</taxon>
        <taxon>Eurotiomycetes</taxon>
        <taxon>Eurotiomycetidae</taxon>
        <taxon>Eurotiales</taxon>
        <taxon>Aspergillaceae</taxon>
        <taxon>Aspergillus</taxon>
        <taxon>Aspergillus subgen. Circumdati</taxon>
    </lineage>
</organism>
<proteinExistence type="inferred from homology"/>
<evidence type="ECO:0000250" key="1"/>
<evidence type="ECO:0000250" key="2">
    <source>
        <dbReference type="UniProtKB" id="P38626"/>
    </source>
</evidence>
<evidence type="ECO:0000255" key="3"/>
<evidence type="ECO:0000255" key="4">
    <source>
        <dbReference type="PROSITE-ProRule" id="PRU00716"/>
    </source>
</evidence>
<evidence type="ECO:0000305" key="5"/>
<keyword id="KW-0274">FAD</keyword>
<keyword id="KW-0285">Flavoprotein</keyword>
<keyword id="KW-0472">Membrane</keyword>
<keyword id="KW-0496">Mitochondrion</keyword>
<keyword id="KW-1000">Mitochondrion outer membrane</keyword>
<keyword id="KW-0520">NAD</keyword>
<keyword id="KW-0560">Oxidoreductase</keyword>
<keyword id="KW-1185">Reference proteome</keyword>
<keyword id="KW-0808">Transferase</keyword>
<keyword id="KW-0812">Transmembrane</keyword>
<keyword id="KW-1133">Transmembrane helix</keyword>
<protein>
    <recommendedName>
        <fullName>NADH-cytochrome b5 reductase 1</fullName>
        <ecNumber evidence="2">1.6.2.2</ecNumber>
    </recommendedName>
    <alternativeName>
        <fullName>Microsomal cytochrome b reductase</fullName>
    </alternativeName>
</protein>
<reference key="1">
    <citation type="submission" date="2005-09" db="EMBL/GenBank/DDBJ databases">
        <title>Annotation of the Aspergillus terreus NIH2624 genome.</title>
        <authorList>
            <person name="Birren B.W."/>
            <person name="Lander E.S."/>
            <person name="Galagan J.E."/>
            <person name="Nusbaum C."/>
            <person name="Devon K."/>
            <person name="Henn M."/>
            <person name="Ma L.-J."/>
            <person name="Jaffe D.B."/>
            <person name="Butler J."/>
            <person name="Alvarez P."/>
            <person name="Gnerre S."/>
            <person name="Grabherr M."/>
            <person name="Kleber M."/>
            <person name="Mauceli E.W."/>
            <person name="Brockman W."/>
            <person name="Rounsley S."/>
            <person name="Young S.K."/>
            <person name="LaButti K."/>
            <person name="Pushparaj V."/>
            <person name="DeCaprio D."/>
            <person name="Crawford M."/>
            <person name="Koehrsen M."/>
            <person name="Engels R."/>
            <person name="Montgomery P."/>
            <person name="Pearson M."/>
            <person name="Howarth C."/>
            <person name="Larson L."/>
            <person name="Luoma S."/>
            <person name="White J."/>
            <person name="Alvarado L."/>
            <person name="Kodira C.D."/>
            <person name="Zeng Q."/>
            <person name="Oleary S."/>
            <person name="Yandava C."/>
            <person name="Denning D.W."/>
            <person name="Nierman W.C."/>
            <person name="Milne T."/>
            <person name="Madden K."/>
        </authorList>
    </citation>
    <scope>NUCLEOTIDE SEQUENCE [LARGE SCALE GENOMIC DNA]</scope>
    <source>
        <strain>NIH 2624 / FGSC A1156</strain>
    </source>
</reference>
<gene>
    <name type="primary">cbr1</name>
    <name type="ORF">ATEG_01397</name>
</gene>
<sequence>MSTFLQDNGDLSAVLVKFAPFAVAVIAILAAWKFTGSSKPRKVLNPSEFQNFVLKEKTDISHNVAIYRFALPRPTDILGLPIGQHISLAATIEGQPKEVVRSYTPISSDNEAGYFDLLVKAYPQGNISKYLTTLKIGDTLKVRGPKGAMVYTPNMCRHIGMIAGGTGITPMLQIIKAIIRNRPRNGGNDTTKIDLIFANVNEEDILLRDELEKLAKEDDGFRIFYVLNNPPPGWNGGFGFVTAEMIKEHLPAPAKDVKILLCGPPPMVSAMKKATESLGYTKARPVSKLEDQVFCF</sequence>
<dbReference type="EC" id="1.6.2.2" evidence="2"/>
<dbReference type="EMBL" id="CH476595">
    <property type="protein sequence ID" value="EAU38154.1"/>
    <property type="molecule type" value="Genomic_DNA"/>
</dbReference>
<dbReference type="RefSeq" id="XP_001208762.1">
    <property type="nucleotide sequence ID" value="XM_001208762.1"/>
</dbReference>
<dbReference type="SMR" id="Q0CY37"/>
<dbReference type="STRING" id="341663.Q0CY37"/>
<dbReference type="EnsemblFungi" id="EAU38154">
    <property type="protein sequence ID" value="EAU38154"/>
    <property type="gene ID" value="ATEG_01397"/>
</dbReference>
<dbReference type="GeneID" id="4315740"/>
<dbReference type="VEuPathDB" id="FungiDB:ATEG_01397"/>
<dbReference type="eggNOG" id="KOG0534">
    <property type="taxonomic scope" value="Eukaryota"/>
</dbReference>
<dbReference type="HOGENOM" id="CLU_003827_9_0_1"/>
<dbReference type="OMA" id="VQIFMCG"/>
<dbReference type="OrthoDB" id="432685at2759"/>
<dbReference type="UniPathway" id="UPA00559"/>
<dbReference type="Proteomes" id="UP000007963">
    <property type="component" value="Unassembled WGS sequence"/>
</dbReference>
<dbReference type="GO" id="GO:0005783">
    <property type="term" value="C:endoplasmic reticulum"/>
    <property type="evidence" value="ECO:0007669"/>
    <property type="project" value="TreeGrafter"/>
</dbReference>
<dbReference type="GO" id="GO:0005741">
    <property type="term" value="C:mitochondrial outer membrane"/>
    <property type="evidence" value="ECO:0007669"/>
    <property type="project" value="UniProtKB-SubCell"/>
</dbReference>
<dbReference type="GO" id="GO:0004128">
    <property type="term" value="F:cytochrome-b5 reductase activity, acting on NAD(P)H"/>
    <property type="evidence" value="ECO:0000250"/>
    <property type="project" value="UniProtKB"/>
</dbReference>
<dbReference type="GO" id="GO:0003954">
    <property type="term" value="F:NADH dehydrogenase activity"/>
    <property type="evidence" value="ECO:0000250"/>
    <property type="project" value="UniProtKB"/>
</dbReference>
<dbReference type="GO" id="GO:0016740">
    <property type="term" value="F:transferase activity"/>
    <property type="evidence" value="ECO:0007669"/>
    <property type="project" value="UniProtKB-KW"/>
</dbReference>
<dbReference type="GO" id="GO:0017183">
    <property type="term" value="P:protein histidyl modification to diphthamide"/>
    <property type="evidence" value="ECO:0000250"/>
    <property type="project" value="UniProtKB"/>
</dbReference>
<dbReference type="GO" id="GO:0002926">
    <property type="term" value="P:tRNA wobble base 5-methoxycarbonylmethyl-2-thiouridinylation"/>
    <property type="evidence" value="ECO:0000250"/>
    <property type="project" value="UniProtKB"/>
</dbReference>
<dbReference type="CDD" id="cd06183">
    <property type="entry name" value="cyt_b5_reduct_like"/>
    <property type="match status" value="1"/>
</dbReference>
<dbReference type="FunFam" id="2.40.30.10:FF:000032">
    <property type="entry name" value="NADH-cytochrome b5 reductase"/>
    <property type="match status" value="1"/>
</dbReference>
<dbReference type="FunFam" id="3.40.50.80:FF:000019">
    <property type="entry name" value="NADH-cytochrome b5 reductase"/>
    <property type="match status" value="1"/>
</dbReference>
<dbReference type="Gene3D" id="3.40.50.80">
    <property type="entry name" value="Nucleotide-binding domain of ferredoxin-NADP reductase (FNR) module"/>
    <property type="match status" value="1"/>
</dbReference>
<dbReference type="Gene3D" id="2.40.30.10">
    <property type="entry name" value="Translation factors"/>
    <property type="match status" value="1"/>
</dbReference>
<dbReference type="InterPro" id="IPR001834">
    <property type="entry name" value="CBR-like"/>
</dbReference>
<dbReference type="InterPro" id="IPR008333">
    <property type="entry name" value="Cbr1-like_FAD-bd_dom"/>
</dbReference>
<dbReference type="InterPro" id="IPR017927">
    <property type="entry name" value="FAD-bd_FR_type"/>
</dbReference>
<dbReference type="InterPro" id="IPR001709">
    <property type="entry name" value="Flavoprot_Pyr_Nucl_cyt_Rdtase"/>
</dbReference>
<dbReference type="InterPro" id="IPR039261">
    <property type="entry name" value="FNR_nucleotide-bd"/>
</dbReference>
<dbReference type="InterPro" id="IPR001433">
    <property type="entry name" value="OxRdtase_FAD/NAD-bd"/>
</dbReference>
<dbReference type="InterPro" id="IPR017938">
    <property type="entry name" value="Riboflavin_synthase-like_b-brl"/>
</dbReference>
<dbReference type="PANTHER" id="PTHR19370">
    <property type="entry name" value="NADH-CYTOCHROME B5 REDUCTASE"/>
    <property type="match status" value="1"/>
</dbReference>
<dbReference type="PANTHER" id="PTHR19370:SF184">
    <property type="entry name" value="NADH-CYTOCHROME B5 REDUCTASE-LIKE"/>
    <property type="match status" value="1"/>
</dbReference>
<dbReference type="Pfam" id="PF00970">
    <property type="entry name" value="FAD_binding_6"/>
    <property type="match status" value="1"/>
</dbReference>
<dbReference type="Pfam" id="PF00175">
    <property type="entry name" value="NAD_binding_1"/>
    <property type="match status" value="1"/>
</dbReference>
<dbReference type="PRINTS" id="PR00406">
    <property type="entry name" value="CYTB5RDTASE"/>
</dbReference>
<dbReference type="PRINTS" id="PR00371">
    <property type="entry name" value="FPNCR"/>
</dbReference>
<dbReference type="SUPFAM" id="SSF52343">
    <property type="entry name" value="Ferredoxin reductase-like, C-terminal NADP-linked domain"/>
    <property type="match status" value="1"/>
</dbReference>
<dbReference type="SUPFAM" id="SSF63380">
    <property type="entry name" value="Riboflavin synthase domain-like"/>
    <property type="match status" value="1"/>
</dbReference>
<dbReference type="PROSITE" id="PS51384">
    <property type="entry name" value="FAD_FR"/>
    <property type="match status" value="1"/>
</dbReference>
<feature type="chain" id="PRO_0000330147" description="NADH-cytochrome b5 reductase 1">
    <location>
        <begin position="1"/>
        <end position="296"/>
    </location>
</feature>
<feature type="transmembrane region" description="Helical" evidence="3">
    <location>
        <begin position="11"/>
        <end position="31"/>
    </location>
</feature>
<feature type="domain" description="FAD-binding FR-type" evidence="4">
    <location>
        <begin position="47"/>
        <end position="152"/>
    </location>
</feature>
<feature type="binding site" evidence="1">
    <location>
        <begin position="132"/>
        <end position="147"/>
    </location>
    <ligand>
        <name>FAD</name>
        <dbReference type="ChEBI" id="CHEBI:57692"/>
    </ligand>
</feature>
<feature type="binding site" evidence="1">
    <location>
        <begin position="158"/>
        <end position="195"/>
    </location>
    <ligand>
        <name>FAD</name>
        <dbReference type="ChEBI" id="CHEBI:57692"/>
    </ligand>
</feature>
<name>NCB5R_ASPTN</name>
<accession>Q0CY37</accession>
<comment type="function">
    <text evidence="2">NADH-dependent reductase for dph3 and cytochrome b5. Required for the first step of diphthamide biosynthesis, a post-translational modification of histidine which occurs in elongation factor 2. Dph1 and dph2 transfer a 3-amino-3-carboxypropyl (ACP) group from S-adenosyl-L-methionine (SAM) to a histidine residue, the reaction is assisted by a reduction system comprising dph3 and a NADH-dependent reductase, predominantly cbr1. By reducing dph3, also involved in the formation of the tRNA wobble base modification mcm5s 2U (5-methoxycarbonylmethyl-2-thiouridine), mediated by the elongator complex. The cytochrome b5/NADH cytochrome b5 reductase electron transfer system supports the catalytic activity of several sterol biosynthetic enzymes.</text>
</comment>
<comment type="catalytic activity">
    <reaction evidence="2">
        <text>2 Fe(III)-[cytochrome b5] + NADH = 2 Fe(II)-[cytochrome b5] + NAD(+) + H(+)</text>
        <dbReference type="Rhea" id="RHEA:46680"/>
        <dbReference type="Rhea" id="RHEA-COMP:10438"/>
        <dbReference type="Rhea" id="RHEA-COMP:10439"/>
        <dbReference type="ChEBI" id="CHEBI:15378"/>
        <dbReference type="ChEBI" id="CHEBI:29033"/>
        <dbReference type="ChEBI" id="CHEBI:29034"/>
        <dbReference type="ChEBI" id="CHEBI:57540"/>
        <dbReference type="ChEBI" id="CHEBI:57945"/>
        <dbReference type="EC" id="1.6.2.2"/>
    </reaction>
</comment>
<comment type="catalytic activity">
    <reaction evidence="2">
        <text>2 Fe(3+)-[Dph3] + NADH = 2 Fe(2+)-[Dph3] + NAD(+) + H(+)</text>
        <dbReference type="Rhea" id="RHEA:71231"/>
        <dbReference type="Rhea" id="RHEA-COMP:18002"/>
        <dbReference type="Rhea" id="RHEA-COMP:18003"/>
        <dbReference type="ChEBI" id="CHEBI:15378"/>
        <dbReference type="ChEBI" id="CHEBI:29033"/>
        <dbReference type="ChEBI" id="CHEBI:29034"/>
        <dbReference type="ChEBI" id="CHEBI:57540"/>
        <dbReference type="ChEBI" id="CHEBI:57945"/>
        <dbReference type="ChEBI" id="CHEBI:83228"/>
    </reaction>
    <physiologicalReaction direction="left-to-right" evidence="2">
        <dbReference type="Rhea" id="RHEA:71232"/>
    </physiologicalReaction>
</comment>
<comment type="cofactor">
    <cofactor evidence="3">
        <name>FAD</name>
        <dbReference type="ChEBI" id="CHEBI:57692"/>
    </cofactor>
</comment>
<comment type="pathway">
    <text evidence="2">Protein modification; peptidyl-diphthamide biosynthesis.</text>
</comment>
<comment type="subunit">
    <text evidence="2">Monomer. Component of the 2-(3-amino-3-carboxypropyl)histidine synthase complex composed of dph1, dph2, dph3 and a NADH-dependent reductase, predominantly cbr1.</text>
</comment>
<comment type="subcellular location">
    <subcellularLocation>
        <location evidence="2">Mitochondrion outer membrane</location>
        <topology evidence="3">Single-pass membrane protein</topology>
    </subcellularLocation>
</comment>
<comment type="similarity">
    <text evidence="5">Belongs to the flavoprotein pyridine nucleotide cytochrome reductase family.</text>
</comment>